<reference key="1">
    <citation type="journal article" date="2007" name="Proc. Natl. Acad. Sci. U.S.A.">
        <title>Genome and proteome of long-chain alkane degrading Geobacillus thermodenitrificans NG80-2 isolated from a deep-subsurface oil reservoir.</title>
        <authorList>
            <person name="Feng L."/>
            <person name="Wang W."/>
            <person name="Cheng J."/>
            <person name="Ren Y."/>
            <person name="Zhao G."/>
            <person name="Gao C."/>
            <person name="Tang Y."/>
            <person name="Liu X."/>
            <person name="Han W."/>
            <person name="Peng X."/>
            <person name="Liu R."/>
            <person name="Wang L."/>
        </authorList>
    </citation>
    <scope>NUCLEOTIDE SEQUENCE [LARGE SCALE GENOMIC DNA]</scope>
    <source>
        <strain>NG80-2</strain>
    </source>
</reference>
<gene>
    <name evidence="1" type="primary">argH</name>
    <name type="ordered locus">GTNG_2681</name>
</gene>
<keyword id="KW-0028">Amino-acid biosynthesis</keyword>
<keyword id="KW-0055">Arginine biosynthesis</keyword>
<keyword id="KW-0963">Cytoplasm</keyword>
<keyword id="KW-0456">Lyase</keyword>
<organism>
    <name type="scientific">Geobacillus thermodenitrificans (strain NG80-2)</name>
    <dbReference type="NCBI Taxonomy" id="420246"/>
    <lineage>
        <taxon>Bacteria</taxon>
        <taxon>Bacillati</taxon>
        <taxon>Bacillota</taxon>
        <taxon>Bacilli</taxon>
        <taxon>Bacillales</taxon>
        <taxon>Anoxybacillaceae</taxon>
        <taxon>Geobacillus</taxon>
    </lineage>
</organism>
<comment type="catalytic activity">
    <reaction evidence="1">
        <text>2-(N(omega)-L-arginino)succinate = fumarate + L-arginine</text>
        <dbReference type="Rhea" id="RHEA:24020"/>
        <dbReference type="ChEBI" id="CHEBI:29806"/>
        <dbReference type="ChEBI" id="CHEBI:32682"/>
        <dbReference type="ChEBI" id="CHEBI:57472"/>
        <dbReference type="EC" id="4.3.2.1"/>
    </reaction>
</comment>
<comment type="pathway">
    <text evidence="1">Amino-acid biosynthesis; L-arginine biosynthesis; L-arginine from L-ornithine and carbamoyl phosphate: step 3/3.</text>
</comment>
<comment type="subcellular location">
    <subcellularLocation>
        <location evidence="1">Cytoplasm</location>
    </subcellularLocation>
</comment>
<comment type="similarity">
    <text evidence="1">Belongs to the lyase 1 family. Argininosuccinate lyase subfamily.</text>
</comment>
<feature type="chain" id="PRO_1000000481" description="Argininosuccinate lyase">
    <location>
        <begin position="1"/>
        <end position="459"/>
    </location>
</feature>
<dbReference type="EC" id="4.3.2.1" evidence="1"/>
<dbReference type="EMBL" id="CP000557">
    <property type="protein sequence ID" value="ABO68026.1"/>
    <property type="molecule type" value="Genomic_DNA"/>
</dbReference>
<dbReference type="RefSeq" id="WP_011887968.1">
    <property type="nucleotide sequence ID" value="NC_009328.1"/>
</dbReference>
<dbReference type="SMR" id="A4IRS2"/>
<dbReference type="KEGG" id="gtn:GTNG_2681"/>
<dbReference type="eggNOG" id="COG0165">
    <property type="taxonomic scope" value="Bacteria"/>
</dbReference>
<dbReference type="HOGENOM" id="CLU_027272_2_3_9"/>
<dbReference type="UniPathway" id="UPA00068">
    <property type="reaction ID" value="UER00114"/>
</dbReference>
<dbReference type="Proteomes" id="UP000001578">
    <property type="component" value="Chromosome"/>
</dbReference>
<dbReference type="GO" id="GO:0005829">
    <property type="term" value="C:cytosol"/>
    <property type="evidence" value="ECO:0007669"/>
    <property type="project" value="TreeGrafter"/>
</dbReference>
<dbReference type="GO" id="GO:0004056">
    <property type="term" value="F:argininosuccinate lyase activity"/>
    <property type="evidence" value="ECO:0007669"/>
    <property type="project" value="UniProtKB-UniRule"/>
</dbReference>
<dbReference type="GO" id="GO:0042450">
    <property type="term" value="P:arginine biosynthetic process via ornithine"/>
    <property type="evidence" value="ECO:0007669"/>
    <property type="project" value="InterPro"/>
</dbReference>
<dbReference type="GO" id="GO:0006526">
    <property type="term" value="P:L-arginine biosynthetic process"/>
    <property type="evidence" value="ECO:0007669"/>
    <property type="project" value="UniProtKB-UniRule"/>
</dbReference>
<dbReference type="CDD" id="cd01359">
    <property type="entry name" value="Argininosuccinate_lyase"/>
    <property type="match status" value="1"/>
</dbReference>
<dbReference type="FunFam" id="1.10.275.10:FF:000002">
    <property type="entry name" value="Argininosuccinate lyase"/>
    <property type="match status" value="1"/>
</dbReference>
<dbReference type="FunFam" id="1.10.40.30:FF:000001">
    <property type="entry name" value="Argininosuccinate lyase"/>
    <property type="match status" value="1"/>
</dbReference>
<dbReference type="FunFam" id="1.20.200.10:FF:000006">
    <property type="entry name" value="Argininosuccinate lyase"/>
    <property type="match status" value="1"/>
</dbReference>
<dbReference type="Gene3D" id="1.10.40.30">
    <property type="entry name" value="Fumarase/aspartase (C-terminal domain)"/>
    <property type="match status" value="1"/>
</dbReference>
<dbReference type="Gene3D" id="1.20.200.10">
    <property type="entry name" value="Fumarase/aspartase (Central domain)"/>
    <property type="match status" value="1"/>
</dbReference>
<dbReference type="Gene3D" id="1.10.275.10">
    <property type="entry name" value="Fumarase/aspartase (N-terminal domain)"/>
    <property type="match status" value="1"/>
</dbReference>
<dbReference type="HAMAP" id="MF_00006">
    <property type="entry name" value="Arg_succ_lyase"/>
    <property type="match status" value="1"/>
</dbReference>
<dbReference type="InterPro" id="IPR029419">
    <property type="entry name" value="Arg_succ_lyase_C"/>
</dbReference>
<dbReference type="InterPro" id="IPR009049">
    <property type="entry name" value="Argininosuccinate_lyase"/>
</dbReference>
<dbReference type="InterPro" id="IPR024083">
    <property type="entry name" value="Fumarase/histidase_N"/>
</dbReference>
<dbReference type="InterPro" id="IPR020557">
    <property type="entry name" value="Fumarate_lyase_CS"/>
</dbReference>
<dbReference type="InterPro" id="IPR000362">
    <property type="entry name" value="Fumarate_lyase_fam"/>
</dbReference>
<dbReference type="InterPro" id="IPR022761">
    <property type="entry name" value="Fumarate_lyase_N"/>
</dbReference>
<dbReference type="InterPro" id="IPR008948">
    <property type="entry name" value="L-Aspartase-like"/>
</dbReference>
<dbReference type="NCBIfam" id="TIGR00838">
    <property type="entry name" value="argH"/>
    <property type="match status" value="1"/>
</dbReference>
<dbReference type="PANTHER" id="PTHR43814">
    <property type="entry name" value="ARGININOSUCCINATE LYASE"/>
    <property type="match status" value="1"/>
</dbReference>
<dbReference type="PANTHER" id="PTHR43814:SF1">
    <property type="entry name" value="ARGININOSUCCINATE LYASE"/>
    <property type="match status" value="1"/>
</dbReference>
<dbReference type="Pfam" id="PF14698">
    <property type="entry name" value="ASL_C2"/>
    <property type="match status" value="1"/>
</dbReference>
<dbReference type="Pfam" id="PF00206">
    <property type="entry name" value="Lyase_1"/>
    <property type="match status" value="1"/>
</dbReference>
<dbReference type="PRINTS" id="PR00145">
    <property type="entry name" value="ARGSUCLYASE"/>
</dbReference>
<dbReference type="PRINTS" id="PR00149">
    <property type="entry name" value="FUMRATELYASE"/>
</dbReference>
<dbReference type="SUPFAM" id="SSF48557">
    <property type="entry name" value="L-aspartase-like"/>
    <property type="match status" value="1"/>
</dbReference>
<dbReference type="PROSITE" id="PS00163">
    <property type="entry name" value="FUMARATE_LYASES"/>
    <property type="match status" value="1"/>
</dbReference>
<accession>A4IRS2</accession>
<protein>
    <recommendedName>
        <fullName evidence="1">Argininosuccinate lyase</fullName>
        <shortName evidence="1">ASAL</shortName>
        <ecNumber evidence="1">4.3.2.1</ecNumber>
    </recommendedName>
    <alternativeName>
        <fullName evidence="1">Arginosuccinase</fullName>
    </alternativeName>
</protein>
<name>ARLY_GEOTN</name>
<sequence>MKKLWGGRFTKTAEEWVDEFGASIPFDQELVEEDIEGSLAHVTMLGECGILPAEDVEKIKDGLLRLLEKAKRGELEFSVAYEDIHLNIEKMLIDDIGSVGGKLHTGRSRNDQVATDMHLYLRKRVKEILSLIRGLQRALVSQAEKHVETIMPGYTHLQRAQPISFAHHLLAYVWMLERDYERFSESLKRINRSPLGAGALAGTTFPINRQRTAELLGFEGIYENSLDAVSDRDFIIEFLSNSSMLMMHLSRLAEELILWSSQEFQFVELDDAFATGSSIMPQKKNPDMAELIRGKTGRVYGHLMALLTVMKGLPLAYNKDMQEDKEGMFDTVKTVIGSLKIFTGMIETMNVRVDAMEKATKQDFSNATELADYLAAKGMPFREAHEVVGKLVLHCIEQGVFLADLPLEVYKEASPLFEKDIYDALNPRTAVNRRNSAGGTGFAEVRATLAKVKERLGTL</sequence>
<proteinExistence type="inferred from homology"/>
<evidence type="ECO:0000255" key="1">
    <source>
        <dbReference type="HAMAP-Rule" id="MF_00006"/>
    </source>
</evidence>